<sequence>MAENNENISKNVDVRPKTSRSRSADRKDGYVWSGKKLSWSKKSESYSDAETVNGIEKTEVSLRNQERKHSCSSIELDLDHSCGHRFLGRSLKQKLQDAVGQCFPIKNCSSRHSSGLPSKRKIHISELMLDKCPFPPRSDLAFRWHFIKRHTAPINSKSDEWVSTDLSQAELKDGQLKRRNMEESINCFSHTNVQPCVITTDNALCREGPITGSVMNLVSNNSIEDSDMDSDDEILTLCTSSRKRNKPKWELDDEILQLETPPKYHTQIDYVHCLVPDLLQINNNPCYWGVMDKYAAEALLEGKPEGTFLLRDSAQEDYLFSVSFRRYSRSLHARIEQWNHNFSFDAHDPCVFHSPDITGLLEHYKDPSACMFFEPLLSTPLIRTFPFSLQHICRTVICNCTTYDGIDALPIPSSMKLYLKEYHYKSKVRVLRIDAPEQQC</sequence>
<proteinExistence type="evidence at transcript level"/>
<name>SOCS4_PONAB</name>
<organism>
    <name type="scientific">Pongo abelii</name>
    <name type="common">Sumatran orangutan</name>
    <name type="synonym">Pongo pygmaeus abelii</name>
    <dbReference type="NCBI Taxonomy" id="9601"/>
    <lineage>
        <taxon>Eukaryota</taxon>
        <taxon>Metazoa</taxon>
        <taxon>Chordata</taxon>
        <taxon>Craniata</taxon>
        <taxon>Vertebrata</taxon>
        <taxon>Euteleostomi</taxon>
        <taxon>Mammalia</taxon>
        <taxon>Eutheria</taxon>
        <taxon>Euarchontoglires</taxon>
        <taxon>Primates</taxon>
        <taxon>Haplorrhini</taxon>
        <taxon>Catarrhini</taxon>
        <taxon>Hominidae</taxon>
        <taxon>Pongo</taxon>
    </lineage>
</organism>
<accession>Q5RDX2</accession>
<evidence type="ECO:0000250" key="1"/>
<evidence type="ECO:0000255" key="2">
    <source>
        <dbReference type="PROSITE-ProRule" id="PRU00191"/>
    </source>
</evidence>
<evidence type="ECO:0000255" key="3">
    <source>
        <dbReference type="PROSITE-ProRule" id="PRU00194"/>
    </source>
</evidence>
<evidence type="ECO:0000256" key="4">
    <source>
        <dbReference type="SAM" id="MobiDB-lite"/>
    </source>
</evidence>
<dbReference type="EMBL" id="CR857770">
    <property type="protein sequence ID" value="CAH90035.1"/>
    <property type="molecule type" value="mRNA"/>
</dbReference>
<dbReference type="RefSeq" id="NP_001124969.1">
    <property type="nucleotide sequence ID" value="NM_001131497.1"/>
</dbReference>
<dbReference type="SMR" id="Q5RDX2"/>
<dbReference type="FunCoup" id="Q5RDX2">
    <property type="interactions" value="436"/>
</dbReference>
<dbReference type="STRING" id="9601.ENSPPYP00000006629"/>
<dbReference type="GeneID" id="100171842"/>
<dbReference type="KEGG" id="pon:100171842"/>
<dbReference type="CTD" id="122809"/>
<dbReference type="eggNOG" id="KOG4566">
    <property type="taxonomic scope" value="Eukaryota"/>
</dbReference>
<dbReference type="InParanoid" id="Q5RDX2"/>
<dbReference type="OrthoDB" id="8820570at2759"/>
<dbReference type="UniPathway" id="UPA00143"/>
<dbReference type="Proteomes" id="UP000001595">
    <property type="component" value="Unplaced"/>
</dbReference>
<dbReference type="GO" id="GO:0005942">
    <property type="term" value="C:phosphatidylinositol 3-kinase complex"/>
    <property type="evidence" value="ECO:0007669"/>
    <property type="project" value="TreeGrafter"/>
</dbReference>
<dbReference type="GO" id="GO:0046935">
    <property type="term" value="F:1-phosphatidylinositol-3-kinase regulator activity"/>
    <property type="evidence" value="ECO:0007669"/>
    <property type="project" value="TreeGrafter"/>
</dbReference>
<dbReference type="GO" id="GO:0035556">
    <property type="term" value="P:intracellular signal transduction"/>
    <property type="evidence" value="ECO:0007669"/>
    <property type="project" value="InterPro"/>
</dbReference>
<dbReference type="GO" id="GO:0007175">
    <property type="term" value="P:negative regulation of epidermal growth factor-activated receptor activity"/>
    <property type="evidence" value="ECO:0000250"/>
    <property type="project" value="UniProtKB"/>
</dbReference>
<dbReference type="GO" id="GO:0046854">
    <property type="term" value="P:phosphatidylinositol phosphate biosynthetic process"/>
    <property type="evidence" value="ECO:0007669"/>
    <property type="project" value="TreeGrafter"/>
</dbReference>
<dbReference type="GO" id="GO:0032436">
    <property type="term" value="P:positive regulation of proteasomal ubiquitin-dependent protein catabolic process"/>
    <property type="evidence" value="ECO:0000250"/>
    <property type="project" value="UniProtKB"/>
</dbReference>
<dbReference type="GO" id="GO:0016567">
    <property type="term" value="P:protein ubiquitination"/>
    <property type="evidence" value="ECO:0007669"/>
    <property type="project" value="UniProtKB-UniPathway"/>
</dbReference>
<dbReference type="CDD" id="cd10385">
    <property type="entry name" value="SH2_SOCS4"/>
    <property type="match status" value="1"/>
</dbReference>
<dbReference type="CDD" id="cd03738">
    <property type="entry name" value="SOCS_SOCS4"/>
    <property type="match status" value="1"/>
</dbReference>
<dbReference type="FunFam" id="3.30.505.10:FF:000028">
    <property type="entry name" value="Suppressor of cytokine signaling 5"/>
    <property type="match status" value="1"/>
</dbReference>
<dbReference type="Gene3D" id="3.30.505.10">
    <property type="entry name" value="SH2 domain"/>
    <property type="match status" value="1"/>
</dbReference>
<dbReference type="InterPro" id="IPR000980">
    <property type="entry name" value="SH2"/>
</dbReference>
<dbReference type="InterPro" id="IPR036860">
    <property type="entry name" value="SH2_dom_sf"/>
</dbReference>
<dbReference type="InterPro" id="IPR022252">
    <property type="entry name" value="SOCS4/SOCS5_dom"/>
</dbReference>
<dbReference type="InterPro" id="IPR035864">
    <property type="entry name" value="SOCS4_SH2"/>
</dbReference>
<dbReference type="InterPro" id="IPR037342">
    <property type="entry name" value="SOCS4_SOCS"/>
</dbReference>
<dbReference type="InterPro" id="IPR001496">
    <property type="entry name" value="SOCS_box"/>
</dbReference>
<dbReference type="InterPro" id="IPR036036">
    <property type="entry name" value="SOCS_box-like_dom_sf"/>
</dbReference>
<dbReference type="PANTHER" id="PTHR10155">
    <property type="entry name" value="PHOSPHATIDYLINOSITOL 3-KINASE REGULATORY SUBUNIT"/>
    <property type="match status" value="1"/>
</dbReference>
<dbReference type="PANTHER" id="PTHR10155:SF21">
    <property type="entry name" value="SUPPRESSOR OF CYTOKINE SIGNALING 4"/>
    <property type="match status" value="1"/>
</dbReference>
<dbReference type="Pfam" id="PF00017">
    <property type="entry name" value="SH2"/>
    <property type="match status" value="1"/>
</dbReference>
<dbReference type="Pfam" id="PF12610">
    <property type="entry name" value="SOCS"/>
    <property type="match status" value="1"/>
</dbReference>
<dbReference type="Pfam" id="PF07525">
    <property type="entry name" value="SOCS_box"/>
    <property type="match status" value="1"/>
</dbReference>
<dbReference type="SMART" id="SM00252">
    <property type="entry name" value="SH2"/>
    <property type="match status" value="1"/>
</dbReference>
<dbReference type="SMART" id="SM00253">
    <property type="entry name" value="SOCS"/>
    <property type="match status" value="1"/>
</dbReference>
<dbReference type="SMART" id="SM00969">
    <property type="entry name" value="SOCS_box"/>
    <property type="match status" value="1"/>
</dbReference>
<dbReference type="SUPFAM" id="SSF55550">
    <property type="entry name" value="SH2 domain"/>
    <property type="match status" value="1"/>
</dbReference>
<dbReference type="SUPFAM" id="SSF158235">
    <property type="entry name" value="SOCS box-like"/>
    <property type="match status" value="1"/>
</dbReference>
<dbReference type="PROSITE" id="PS50001">
    <property type="entry name" value="SH2"/>
    <property type="match status" value="1"/>
</dbReference>
<dbReference type="PROSITE" id="PS50225">
    <property type="entry name" value="SOCS"/>
    <property type="match status" value="1"/>
</dbReference>
<keyword id="KW-0341">Growth regulation</keyword>
<keyword id="KW-1185">Reference proteome</keyword>
<keyword id="KW-0727">SH2 domain</keyword>
<keyword id="KW-0734">Signal transduction inhibitor</keyword>
<keyword id="KW-0833">Ubl conjugation pathway</keyword>
<gene>
    <name type="primary">SOCS4</name>
</gene>
<comment type="function">
    <text evidence="1">SOCS family proteins form part of a classical negative feedback system that regulates cytokine signal transduction. Substrate-recognition component of a SCF-like ECS (Elongin BC-CUL2/5-SOCS-box protein) E3 ubiquitin-protein ligase complex which mediates the ubiquitination and subsequent proteasomal degradation of target proteins. Inhibits EGF signaling by mediating the degradation of the Tyr-phosphorylated EGF receptor/EGFR (By similarity).</text>
</comment>
<comment type="pathway">
    <text>Protein modification; protein ubiquitination.</text>
</comment>
<comment type="domain">
    <text evidence="1">The SOCS box domain mediates the interaction with the Elongin BC complex, an adapter module in different E3 ubiquitin ligase complexes.</text>
</comment>
<feature type="chain" id="PRO_0000285845" description="Suppressor of cytokine signaling 4">
    <location>
        <begin position="1"/>
        <end position="440"/>
    </location>
</feature>
<feature type="domain" description="SH2" evidence="2">
    <location>
        <begin position="286"/>
        <end position="381"/>
    </location>
</feature>
<feature type="domain" description="SOCS box" evidence="3">
    <location>
        <begin position="376"/>
        <end position="425"/>
    </location>
</feature>
<feature type="region of interest" description="Disordered" evidence="4">
    <location>
        <begin position="1"/>
        <end position="29"/>
    </location>
</feature>
<feature type="compositionally biased region" description="Polar residues" evidence="4">
    <location>
        <begin position="1"/>
        <end position="10"/>
    </location>
</feature>
<feature type="compositionally biased region" description="Basic and acidic residues" evidence="4">
    <location>
        <begin position="12"/>
        <end position="29"/>
    </location>
</feature>
<protein>
    <recommendedName>
        <fullName>Suppressor of cytokine signaling 4</fullName>
        <shortName>SOCS-4</shortName>
    </recommendedName>
</protein>
<reference key="1">
    <citation type="submission" date="2004-11" db="EMBL/GenBank/DDBJ databases">
        <authorList>
            <consortium name="The German cDNA consortium"/>
        </authorList>
    </citation>
    <scope>NUCLEOTIDE SEQUENCE [LARGE SCALE MRNA]</scope>
    <source>
        <tissue>Kidney</tissue>
    </source>
</reference>